<keyword id="KW-0025">Alternative splicing</keyword>
<keyword id="KW-0285">Flavoprotein</keyword>
<keyword id="KW-0288">FMN</keyword>
<keyword id="KW-0560">Oxidoreductase</keyword>
<keyword id="KW-1267">Proteomics identification</keyword>
<keyword id="KW-1185">Reference proteome</keyword>
<keyword id="KW-0819">tRNA processing</keyword>
<dbReference type="EC" id="1.3.1.90" evidence="7"/>
<dbReference type="EMBL" id="U62767">
    <property type="protein sequence ID" value="AAD00100.1"/>
    <property type="status" value="ALT_FRAME"/>
    <property type="molecule type" value="mRNA"/>
</dbReference>
<dbReference type="EMBL" id="AK297195">
    <property type="protein sequence ID" value="BAG59682.1"/>
    <property type="molecule type" value="mRNA"/>
</dbReference>
<dbReference type="EMBL" id="CH471070">
    <property type="protein sequence ID" value="EAW83400.1"/>
    <property type="molecule type" value="Genomic_DNA"/>
</dbReference>
<dbReference type="EMBL" id="BC111774">
    <property type="protein sequence ID" value="AAI11775.1"/>
    <property type="molecule type" value="mRNA"/>
</dbReference>
<dbReference type="CCDS" id="CCDS5745.1">
    <molecule id="O95620-1"/>
</dbReference>
<dbReference type="RefSeq" id="NP_001257348.1">
    <molecule id="O95620-1"/>
    <property type="nucleotide sequence ID" value="NM_001270419.2"/>
</dbReference>
<dbReference type="RefSeq" id="NP_853559.1">
    <molecule id="O95620-1"/>
    <property type="nucleotide sequence ID" value="NM_181581.3"/>
</dbReference>
<dbReference type="RefSeq" id="XP_005250182.1">
    <property type="nucleotide sequence ID" value="XM_005250125.4"/>
</dbReference>
<dbReference type="RefSeq" id="XP_011514068.1">
    <property type="nucleotide sequence ID" value="XM_011515766.2"/>
</dbReference>
<dbReference type="RefSeq" id="XP_011514069.1">
    <property type="nucleotide sequence ID" value="XM_011515767.2"/>
</dbReference>
<dbReference type="RefSeq" id="XP_016867197.1">
    <property type="nucleotide sequence ID" value="XM_017011708.1"/>
</dbReference>
<dbReference type="SMR" id="O95620"/>
<dbReference type="BioGRID" id="116246">
    <property type="interactions" value="11"/>
</dbReference>
<dbReference type="FunCoup" id="O95620">
    <property type="interactions" value="922"/>
</dbReference>
<dbReference type="IntAct" id="O95620">
    <property type="interactions" value="7"/>
</dbReference>
<dbReference type="STRING" id="9606.ENSP00000265720"/>
<dbReference type="GlyGen" id="O95620">
    <property type="glycosylation" value="1 site, 1 O-linked glycan (1 site)"/>
</dbReference>
<dbReference type="iPTMnet" id="O95620"/>
<dbReference type="PhosphoSitePlus" id="O95620"/>
<dbReference type="BioMuta" id="DUS4L"/>
<dbReference type="jPOST" id="O95620"/>
<dbReference type="MassIVE" id="O95620"/>
<dbReference type="PaxDb" id="9606-ENSP00000265720"/>
<dbReference type="PeptideAtlas" id="O95620"/>
<dbReference type="ProteomicsDB" id="50952">
    <molecule id="O95620-1"/>
</dbReference>
<dbReference type="ProteomicsDB" id="50953">
    <molecule id="O95620-2"/>
</dbReference>
<dbReference type="Pumba" id="O95620"/>
<dbReference type="Antibodypedia" id="48607">
    <property type="antibodies" value="129 antibodies from 19 providers"/>
</dbReference>
<dbReference type="DNASU" id="11062"/>
<dbReference type="Ensembl" id="ENST00000265720.8">
    <molecule id="O95620-1"/>
    <property type="protein sequence ID" value="ENSP00000265720.3"/>
    <property type="gene ID" value="ENSG00000105865.11"/>
</dbReference>
<dbReference type="Ensembl" id="ENST00000639937.2">
    <molecule id="O95620-1"/>
    <property type="protein sequence ID" value="ENSP00000491438.1"/>
    <property type="gene ID" value="ENSG00000284103.2"/>
</dbReference>
<dbReference type="GeneID" id="11062"/>
<dbReference type="KEGG" id="hsa:11062"/>
<dbReference type="MANE-Select" id="ENST00000265720.8">
    <property type="protein sequence ID" value="ENSP00000265720.3"/>
    <property type="RefSeq nucleotide sequence ID" value="NM_181581.3"/>
    <property type="RefSeq protein sequence ID" value="NP_853559.1"/>
</dbReference>
<dbReference type="UCSC" id="uc003veh.5">
    <molecule id="O95620-1"/>
    <property type="organism name" value="human"/>
</dbReference>
<dbReference type="AGR" id="HGNC:21517"/>
<dbReference type="CTD" id="11062"/>
<dbReference type="DisGeNET" id="11062"/>
<dbReference type="GeneCards" id="DUS4L"/>
<dbReference type="HGNC" id="HGNC:21517">
    <property type="gene designation" value="DUS4L"/>
</dbReference>
<dbReference type="HPA" id="ENSG00000105865">
    <property type="expression patterns" value="Low tissue specificity"/>
</dbReference>
<dbReference type="MalaCards" id="DUS4L"/>
<dbReference type="neXtProt" id="NX_O95620"/>
<dbReference type="OpenTargets" id="ENSG00000105865"/>
<dbReference type="PharmGKB" id="PA142671939"/>
<dbReference type="VEuPathDB" id="HostDB:ENSG00000105865"/>
<dbReference type="eggNOG" id="KOG2335">
    <property type="taxonomic scope" value="Eukaryota"/>
</dbReference>
<dbReference type="GeneTree" id="ENSGT00550000074907"/>
<dbReference type="HOGENOM" id="CLU_013299_4_2_1"/>
<dbReference type="InParanoid" id="O95620"/>
<dbReference type="OMA" id="QRPHHDI"/>
<dbReference type="OrthoDB" id="9977870at2759"/>
<dbReference type="PAN-GO" id="O95620">
    <property type="GO annotations" value="1 GO annotation based on evolutionary models"/>
</dbReference>
<dbReference type="PhylomeDB" id="O95620"/>
<dbReference type="TreeFam" id="TF105618"/>
<dbReference type="PathwayCommons" id="O95620"/>
<dbReference type="SignaLink" id="O95620"/>
<dbReference type="BioGRID-ORCS" id="11062">
    <property type="hits" value="11 hits in 1149 CRISPR screens"/>
</dbReference>
<dbReference type="GenomeRNAi" id="11062"/>
<dbReference type="Pharos" id="O95620">
    <property type="development level" value="Tbio"/>
</dbReference>
<dbReference type="PRO" id="PR:O95620"/>
<dbReference type="Proteomes" id="UP000005640">
    <property type="component" value="Chromosome 7"/>
</dbReference>
<dbReference type="RNAct" id="O95620">
    <property type="molecule type" value="protein"/>
</dbReference>
<dbReference type="Bgee" id="ENSG00000105865">
    <property type="expression patterns" value="Expressed in endometrium and 102 other cell types or tissues"/>
</dbReference>
<dbReference type="ExpressionAtlas" id="O95620">
    <property type="expression patterns" value="baseline and differential"/>
</dbReference>
<dbReference type="GO" id="GO:0050660">
    <property type="term" value="F:flavin adenine dinucleotide binding"/>
    <property type="evidence" value="ECO:0007669"/>
    <property type="project" value="InterPro"/>
</dbReference>
<dbReference type="GO" id="GO:0017150">
    <property type="term" value="F:tRNA dihydrouridine synthase activity"/>
    <property type="evidence" value="ECO:0000318"/>
    <property type="project" value="GO_Central"/>
</dbReference>
<dbReference type="GO" id="GO:0102266">
    <property type="term" value="F:tRNA-dihydrouridine20a synthase activity"/>
    <property type="evidence" value="ECO:0007669"/>
    <property type="project" value="RHEA"/>
</dbReference>
<dbReference type="GO" id="GO:0102267">
    <property type="term" value="F:tRNA-dihydrouridine20b synthase activity"/>
    <property type="evidence" value="ECO:0007669"/>
    <property type="project" value="RHEA"/>
</dbReference>
<dbReference type="GO" id="GO:0002943">
    <property type="term" value="P:tRNA dihydrouridine synthesis"/>
    <property type="evidence" value="ECO:0000314"/>
    <property type="project" value="UniProtKB"/>
</dbReference>
<dbReference type="CDD" id="cd02801">
    <property type="entry name" value="DUS_like_FMN"/>
    <property type="match status" value="1"/>
</dbReference>
<dbReference type="FunFam" id="3.20.20.70:FF:000100">
    <property type="entry name" value="tRNA-dihydrouridine synthase"/>
    <property type="match status" value="1"/>
</dbReference>
<dbReference type="Gene3D" id="3.20.20.70">
    <property type="entry name" value="Aldolase class I"/>
    <property type="match status" value="1"/>
</dbReference>
<dbReference type="InterPro" id="IPR013785">
    <property type="entry name" value="Aldolase_TIM"/>
</dbReference>
<dbReference type="InterPro" id="IPR035587">
    <property type="entry name" value="DUS-like_FMN-bd"/>
</dbReference>
<dbReference type="InterPro" id="IPR001269">
    <property type="entry name" value="DUS_fam"/>
</dbReference>
<dbReference type="InterPro" id="IPR018517">
    <property type="entry name" value="tRNA_hU_synthase_CS"/>
</dbReference>
<dbReference type="PANTHER" id="PTHR11082">
    <property type="entry name" value="TRNA-DIHYDROURIDINE SYNTHASE"/>
    <property type="match status" value="1"/>
</dbReference>
<dbReference type="PANTHER" id="PTHR11082:SF31">
    <property type="entry name" value="TRNA-DIHYDROURIDINE(20A_20B) SYNTHASE [NAD(P)+]-LIKE"/>
    <property type="match status" value="1"/>
</dbReference>
<dbReference type="Pfam" id="PF01207">
    <property type="entry name" value="Dus"/>
    <property type="match status" value="1"/>
</dbReference>
<dbReference type="PIRSF" id="PIRSF006621">
    <property type="entry name" value="Dus"/>
    <property type="match status" value="1"/>
</dbReference>
<dbReference type="SUPFAM" id="SSF51395">
    <property type="entry name" value="FMN-linked oxidoreductases"/>
    <property type="match status" value="1"/>
</dbReference>
<dbReference type="PROSITE" id="PS01136">
    <property type="entry name" value="UPF0034"/>
    <property type="match status" value="1"/>
</dbReference>
<gene>
    <name type="primary">DUS4L</name>
</gene>
<feature type="chain" id="PRO_0000247347" description="tRNA-dihydrouridine(20a/20b) synthase [NAD(P)+]-like">
    <location>
        <begin position="1"/>
        <end position="317"/>
    </location>
</feature>
<feature type="active site" description="Proton donor" evidence="2">
    <location>
        <position position="116"/>
    </location>
</feature>
<feature type="binding site" evidence="2">
    <location>
        <begin position="33"/>
        <end position="35"/>
    </location>
    <ligand>
        <name>FMN</name>
        <dbReference type="ChEBI" id="CHEBI:58210"/>
    </ligand>
</feature>
<feature type="binding site" evidence="2">
    <location>
        <position position="87"/>
    </location>
    <ligand>
        <name>FMN</name>
        <dbReference type="ChEBI" id="CHEBI:58210"/>
    </ligand>
</feature>
<feature type="binding site" evidence="2">
    <location>
        <position position="158"/>
    </location>
    <ligand>
        <name>FMN</name>
        <dbReference type="ChEBI" id="CHEBI:58210"/>
    </ligand>
</feature>
<feature type="binding site" evidence="2">
    <location>
        <position position="186"/>
    </location>
    <ligand>
        <name>FMN</name>
        <dbReference type="ChEBI" id="CHEBI:58210"/>
    </ligand>
</feature>
<feature type="binding site" evidence="2">
    <location>
        <begin position="216"/>
        <end position="218"/>
    </location>
    <ligand>
        <name>FMN</name>
        <dbReference type="ChEBI" id="CHEBI:58210"/>
    </ligand>
</feature>
<feature type="binding site" evidence="2">
    <location>
        <begin position="240"/>
        <end position="241"/>
    </location>
    <ligand>
        <name>FMN</name>
        <dbReference type="ChEBI" id="CHEBI:58210"/>
    </ligand>
</feature>
<feature type="splice variant" id="VSP_019975" description="In isoform 2." evidence="4 5">
    <location>
        <begin position="1"/>
        <end position="121"/>
    </location>
</feature>
<feature type="sequence variant" id="VAR_048938" description="In dbSNP:rs6956789.">
    <original>T</original>
    <variation>A</variation>
    <location>
        <position position="178"/>
    </location>
</feature>
<feature type="sequence variant" id="VAR_027094" description="In dbSNP:rs6957510.">
    <original>R</original>
    <variation>Q</variation>
    <location>
        <position position="230"/>
    </location>
</feature>
<feature type="sequence conflict" description="In Ref. 1; AAD00100." evidence="6" ref="1">
    <original>H</original>
    <variation>N</variation>
    <location>
        <position position="162"/>
    </location>
</feature>
<feature type="sequence conflict" description="In Ref. 1; AAD00100." evidence="6" ref="1">
    <original>S</original>
    <variation>C</variation>
    <location>
        <position position="210"/>
    </location>
</feature>
<name>DUS4L_HUMAN</name>
<evidence type="ECO:0000250" key="1">
    <source>
        <dbReference type="UniProtKB" id="Q06063"/>
    </source>
</evidence>
<evidence type="ECO:0000250" key="2">
    <source>
        <dbReference type="UniProtKB" id="Q5SMC7"/>
    </source>
</evidence>
<evidence type="ECO:0000269" key="3">
    <source>
    </source>
</evidence>
<evidence type="ECO:0000303" key="4">
    <source>
    </source>
</evidence>
<evidence type="ECO:0000303" key="5">
    <source>
    </source>
</evidence>
<evidence type="ECO:0000305" key="6"/>
<evidence type="ECO:0000305" key="7">
    <source>
    </source>
</evidence>
<accession>O95620</accession>
<accession>B4DLX0</accession>
<accession>Q2NKK1</accession>
<sequence length="317" mass="35816">MKSDCMQTTICQERKKDPIEMFHSGQLVKVCAPMVRYSKLAFRTLVRKYSCDLCYTPMIVAADFVKSIKARDSEFTTNQGDCPLIVQFAANDARLLSDAARIVCPYANGIDINCGCPQRWAMAEGYGACLINKPELVQDMVKQVRNQVETPGFSVSIKIRIHDDLKRTVDLCQKAEATGVSWITVHGRTAEERHQPVHYDSIKIIKENMSIPVIANGDIRSLKEAENVWRITGTDGVMVARGLLANPAMFAGYEETPLKCIWDWVDIALELGTPYMCFHQHLMYMMEKITSRQEKRVFNALSSTSAIIDYLTDHYGI</sequence>
<proteinExistence type="evidence at protein level"/>
<comment type="function">
    <text evidence="3">Catalyzes the synthesis of dihydrouridine, a modified base found in the D-loop of most tRNAs.</text>
</comment>
<comment type="catalytic activity">
    <reaction evidence="7">
        <text>5,6-dihydrouridine(20a) in tRNA + NADP(+) = uridine(20a) in tRNA + NADPH + H(+)</text>
        <dbReference type="Rhea" id="RHEA:53344"/>
        <dbReference type="Rhea" id="RHEA-COMP:13535"/>
        <dbReference type="Rhea" id="RHEA-COMP:13536"/>
        <dbReference type="ChEBI" id="CHEBI:15378"/>
        <dbReference type="ChEBI" id="CHEBI:57783"/>
        <dbReference type="ChEBI" id="CHEBI:58349"/>
        <dbReference type="ChEBI" id="CHEBI:65315"/>
        <dbReference type="ChEBI" id="CHEBI:74443"/>
        <dbReference type="EC" id="1.3.1.90"/>
    </reaction>
    <physiologicalReaction direction="right-to-left" evidence="7">
        <dbReference type="Rhea" id="RHEA:53346"/>
    </physiologicalReaction>
</comment>
<comment type="catalytic activity">
    <reaction evidence="7">
        <text>5,6-dihydrouridine(20a) in tRNA + NAD(+) = uridine(20a) in tRNA + NADH + H(+)</text>
        <dbReference type="Rhea" id="RHEA:53348"/>
        <dbReference type="Rhea" id="RHEA-COMP:13535"/>
        <dbReference type="Rhea" id="RHEA-COMP:13536"/>
        <dbReference type="ChEBI" id="CHEBI:15378"/>
        <dbReference type="ChEBI" id="CHEBI:57540"/>
        <dbReference type="ChEBI" id="CHEBI:57945"/>
        <dbReference type="ChEBI" id="CHEBI:65315"/>
        <dbReference type="ChEBI" id="CHEBI:74443"/>
        <dbReference type="EC" id="1.3.1.90"/>
    </reaction>
    <physiologicalReaction direction="right-to-left" evidence="7">
        <dbReference type="Rhea" id="RHEA:53350"/>
    </physiologicalReaction>
</comment>
<comment type="catalytic activity">
    <reaction evidence="1">
        <text>5,6-dihydrouridine(20b) in tRNA + NAD(+) = uridine(20b) in tRNA + NADH + H(+)</text>
        <dbReference type="Rhea" id="RHEA:53352"/>
        <dbReference type="Rhea" id="RHEA-COMP:13537"/>
        <dbReference type="Rhea" id="RHEA-COMP:13538"/>
        <dbReference type="ChEBI" id="CHEBI:15378"/>
        <dbReference type="ChEBI" id="CHEBI:57540"/>
        <dbReference type="ChEBI" id="CHEBI:57945"/>
        <dbReference type="ChEBI" id="CHEBI:65315"/>
        <dbReference type="ChEBI" id="CHEBI:74443"/>
        <dbReference type="EC" id="1.3.1.90"/>
    </reaction>
    <physiologicalReaction direction="right-to-left" evidence="1">
        <dbReference type="Rhea" id="RHEA:53354"/>
    </physiologicalReaction>
</comment>
<comment type="catalytic activity">
    <reaction evidence="1">
        <text>5,6-dihydrouridine(20b) in tRNA + NADP(+) = uridine(20b) in tRNA + NADPH + H(+)</text>
        <dbReference type="Rhea" id="RHEA:53356"/>
        <dbReference type="Rhea" id="RHEA-COMP:13537"/>
        <dbReference type="Rhea" id="RHEA-COMP:13538"/>
        <dbReference type="ChEBI" id="CHEBI:15378"/>
        <dbReference type="ChEBI" id="CHEBI:57783"/>
        <dbReference type="ChEBI" id="CHEBI:58349"/>
        <dbReference type="ChEBI" id="CHEBI:65315"/>
        <dbReference type="ChEBI" id="CHEBI:74443"/>
        <dbReference type="EC" id="1.3.1.90"/>
    </reaction>
    <physiologicalReaction direction="right-to-left" evidence="1">
        <dbReference type="Rhea" id="RHEA:53358"/>
    </physiologicalReaction>
</comment>
<comment type="cofactor">
    <cofactor evidence="2">
        <name>FMN</name>
        <dbReference type="ChEBI" id="CHEBI:58210"/>
    </cofactor>
</comment>
<comment type="alternative products">
    <event type="alternative splicing"/>
    <isoform>
        <id>O95620-1</id>
        <name>1</name>
        <sequence type="displayed"/>
    </isoform>
    <isoform>
        <id>O95620-2</id>
        <name>2</name>
        <sequence type="described" ref="VSP_019975"/>
    </isoform>
</comment>
<comment type="miscellaneous">
    <molecule>Isoform 2</molecule>
    <text evidence="6">May be produced at very low levels due to a premature stop codon in the mRNA, leading to nonsense-mediated mRNA decay.</text>
</comment>
<comment type="similarity">
    <text evidence="6">Belongs to the Dus family. Dus4 subfamily.</text>
</comment>
<comment type="sequence caution" evidence="6">
    <conflict type="frameshift">
        <sequence resource="EMBL-CDS" id="AAD00100"/>
    </conflict>
</comment>
<protein>
    <recommendedName>
        <fullName>tRNA-dihydrouridine(20a/20b) synthase [NAD(P)+]-like</fullName>
        <ecNumber evidence="7">1.3.1.90</ecNumber>
    </recommendedName>
    <alternativeName>
        <fullName>pp35</fullName>
    </alternativeName>
    <alternativeName>
        <fullName>tRNA-dihydrouridine synthase 4-like</fullName>
    </alternativeName>
</protein>
<reference key="1">
    <citation type="submission" date="1996-07" db="EMBL/GenBank/DDBJ databases">
        <title>The gene encoding a human placental cDNA homologous with the E.coli yhdg and R. capsulatus nifR3 genes is located on chromosome 7.</title>
        <authorList>
            <person name="Laustsen P.G."/>
            <person name="Kristensen T."/>
        </authorList>
    </citation>
    <scope>NUCLEOTIDE SEQUENCE [MRNA] (ISOFORM 1)</scope>
    <source>
        <tissue>Placenta</tissue>
    </source>
</reference>
<reference key="2">
    <citation type="journal article" date="2004" name="Nat. Genet.">
        <title>Complete sequencing and characterization of 21,243 full-length human cDNAs.</title>
        <authorList>
            <person name="Ota T."/>
            <person name="Suzuki Y."/>
            <person name="Nishikawa T."/>
            <person name="Otsuki T."/>
            <person name="Sugiyama T."/>
            <person name="Irie R."/>
            <person name="Wakamatsu A."/>
            <person name="Hayashi K."/>
            <person name="Sato H."/>
            <person name="Nagai K."/>
            <person name="Kimura K."/>
            <person name="Makita H."/>
            <person name="Sekine M."/>
            <person name="Obayashi M."/>
            <person name="Nishi T."/>
            <person name="Shibahara T."/>
            <person name="Tanaka T."/>
            <person name="Ishii S."/>
            <person name="Yamamoto J."/>
            <person name="Saito K."/>
            <person name="Kawai Y."/>
            <person name="Isono Y."/>
            <person name="Nakamura Y."/>
            <person name="Nagahari K."/>
            <person name="Murakami K."/>
            <person name="Yasuda T."/>
            <person name="Iwayanagi T."/>
            <person name="Wagatsuma M."/>
            <person name="Shiratori A."/>
            <person name="Sudo H."/>
            <person name="Hosoiri T."/>
            <person name="Kaku Y."/>
            <person name="Kodaira H."/>
            <person name="Kondo H."/>
            <person name="Sugawara M."/>
            <person name="Takahashi M."/>
            <person name="Kanda K."/>
            <person name="Yokoi T."/>
            <person name="Furuya T."/>
            <person name="Kikkawa E."/>
            <person name="Omura Y."/>
            <person name="Abe K."/>
            <person name="Kamihara K."/>
            <person name="Katsuta N."/>
            <person name="Sato K."/>
            <person name="Tanikawa M."/>
            <person name="Yamazaki M."/>
            <person name="Ninomiya K."/>
            <person name="Ishibashi T."/>
            <person name="Yamashita H."/>
            <person name="Murakawa K."/>
            <person name="Fujimori K."/>
            <person name="Tanai H."/>
            <person name="Kimata M."/>
            <person name="Watanabe M."/>
            <person name="Hiraoka S."/>
            <person name="Chiba Y."/>
            <person name="Ishida S."/>
            <person name="Ono Y."/>
            <person name="Takiguchi S."/>
            <person name="Watanabe S."/>
            <person name="Yosida M."/>
            <person name="Hotuta T."/>
            <person name="Kusano J."/>
            <person name="Kanehori K."/>
            <person name="Takahashi-Fujii A."/>
            <person name="Hara H."/>
            <person name="Tanase T.-O."/>
            <person name="Nomura Y."/>
            <person name="Togiya S."/>
            <person name="Komai F."/>
            <person name="Hara R."/>
            <person name="Takeuchi K."/>
            <person name="Arita M."/>
            <person name="Imose N."/>
            <person name="Musashino K."/>
            <person name="Yuuki H."/>
            <person name="Oshima A."/>
            <person name="Sasaki N."/>
            <person name="Aotsuka S."/>
            <person name="Yoshikawa Y."/>
            <person name="Matsunawa H."/>
            <person name="Ichihara T."/>
            <person name="Shiohata N."/>
            <person name="Sano S."/>
            <person name="Moriya S."/>
            <person name="Momiyama H."/>
            <person name="Satoh N."/>
            <person name="Takami S."/>
            <person name="Terashima Y."/>
            <person name="Suzuki O."/>
            <person name="Nakagawa S."/>
            <person name="Senoh A."/>
            <person name="Mizoguchi H."/>
            <person name="Goto Y."/>
            <person name="Shimizu F."/>
            <person name="Wakebe H."/>
            <person name="Hishigaki H."/>
            <person name="Watanabe T."/>
            <person name="Sugiyama A."/>
            <person name="Takemoto M."/>
            <person name="Kawakami B."/>
            <person name="Yamazaki M."/>
            <person name="Watanabe K."/>
            <person name="Kumagai A."/>
            <person name="Itakura S."/>
            <person name="Fukuzumi Y."/>
            <person name="Fujimori Y."/>
            <person name="Komiyama M."/>
            <person name="Tashiro H."/>
            <person name="Tanigami A."/>
            <person name="Fujiwara T."/>
            <person name="Ono T."/>
            <person name="Yamada K."/>
            <person name="Fujii Y."/>
            <person name="Ozaki K."/>
            <person name="Hirao M."/>
            <person name="Ohmori Y."/>
            <person name="Kawabata A."/>
            <person name="Hikiji T."/>
            <person name="Kobatake N."/>
            <person name="Inagaki H."/>
            <person name="Ikema Y."/>
            <person name="Okamoto S."/>
            <person name="Okitani R."/>
            <person name="Kawakami T."/>
            <person name="Noguchi S."/>
            <person name="Itoh T."/>
            <person name="Shigeta K."/>
            <person name="Senba T."/>
            <person name="Matsumura K."/>
            <person name="Nakajima Y."/>
            <person name="Mizuno T."/>
            <person name="Morinaga M."/>
            <person name="Sasaki M."/>
            <person name="Togashi T."/>
            <person name="Oyama M."/>
            <person name="Hata H."/>
            <person name="Watanabe M."/>
            <person name="Komatsu T."/>
            <person name="Mizushima-Sugano J."/>
            <person name="Satoh T."/>
            <person name="Shirai Y."/>
            <person name="Takahashi Y."/>
            <person name="Nakagawa K."/>
            <person name="Okumura K."/>
            <person name="Nagase T."/>
            <person name="Nomura N."/>
            <person name="Kikuchi H."/>
            <person name="Masuho Y."/>
            <person name="Yamashita R."/>
            <person name="Nakai K."/>
            <person name="Yada T."/>
            <person name="Nakamura Y."/>
            <person name="Ohara O."/>
            <person name="Isogai T."/>
            <person name="Sugano S."/>
        </authorList>
    </citation>
    <scope>NUCLEOTIDE SEQUENCE [LARGE SCALE MRNA] (ISOFORM 2)</scope>
    <source>
        <tissue>Brain</tissue>
    </source>
</reference>
<reference key="3">
    <citation type="submission" date="2005-07" db="EMBL/GenBank/DDBJ databases">
        <authorList>
            <person name="Mural R.J."/>
            <person name="Istrail S."/>
            <person name="Sutton G.G."/>
            <person name="Florea L."/>
            <person name="Halpern A.L."/>
            <person name="Mobarry C.M."/>
            <person name="Lippert R."/>
            <person name="Walenz B."/>
            <person name="Shatkay H."/>
            <person name="Dew I."/>
            <person name="Miller J.R."/>
            <person name="Flanigan M.J."/>
            <person name="Edwards N.J."/>
            <person name="Bolanos R."/>
            <person name="Fasulo D."/>
            <person name="Halldorsson B.V."/>
            <person name="Hannenhalli S."/>
            <person name="Turner R."/>
            <person name="Yooseph S."/>
            <person name="Lu F."/>
            <person name="Nusskern D.R."/>
            <person name="Shue B.C."/>
            <person name="Zheng X.H."/>
            <person name="Zhong F."/>
            <person name="Delcher A.L."/>
            <person name="Huson D.H."/>
            <person name="Kravitz S.A."/>
            <person name="Mouchard L."/>
            <person name="Reinert K."/>
            <person name="Remington K.A."/>
            <person name="Clark A.G."/>
            <person name="Waterman M.S."/>
            <person name="Eichler E.E."/>
            <person name="Adams M.D."/>
            <person name="Hunkapiller M.W."/>
            <person name="Myers E.W."/>
            <person name="Venter J.C."/>
        </authorList>
    </citation>
    <scope>NUCLEOTIDE SEQUENCE [LARGE SCALE GENOMIC DNA]</scope>
</reference>
<reference key="4">
    <citation type="journal article" date="2004" name="Genome Res.">
        <title>The status, quality, and expansion of the NIH full-length cDNA project: the Mammalian Gene Collection (MGC).</title>
        <authorList>
            <consortium name="The MGC Project Team"/>
        </authorList>
    </citation>
    <scope>NUCLEOTIDE SEQUENCE [LARGE SCALE MRNA] (ISOFORM 2)</scope>
</reference>
<reference key="5">
    <citation type="journal article" date="2021" name="Mol. Cell">
        <title>Transcription-wide mapping of dihydrouridine reveals that mRNA dihydrouridylation is required for meiotic chromosome segregation.</title>
        <authorList>
            <person name="Finet O."/>
            <person name="Yague-Sanz C."/>
            <person name="Krueger L.K."/>
            <person name="Tran P."/>
            <person name="Migeot V."/>
            <person name="Louski M."/>
            <person name="Nevers A."/>
            <person name="Rougemaille M."/>
            <person name="Sun J."/>
            <person name="Ernst F.G.M."/>
            <person name="Wacheul L."/>
            <person name="Wery M."/>
            <person name="Morillon A."/>
            <person name="Dedon P."/>
            <person name="Lafontaine D.L.J."/>
            <person name="Hermand D."/>
        </authorList>
    </citation>
    <scope>FUNCTION</scope>
    <scope>CATALYTIC ACTIVITY</scope>
</reference>
<organism>
    <name type="scientific">Homo sapiens</name>
    <name type="common">Human</name>
    <dbReference type="NCBI Taxonomy" id="9606"/>
    <lineage>
        <taxon>Eukaryota</taxon>
        <taxon>Metazoa</taxon>
        <taxon>Chordata</taxon>
        <taxon>Craniata</taxon>
        <taxon>Vertebrata</taxon>
        <taxon>Euteleostomi</taxon>
        <taxon>Mammalia</taxon>
        <taxon>Eutheria</taxon>
        <taxon>Euarchontoglires</taxon>
        <taxon>Primates</taxon>
        <taxon>Haplorrhini</taxon>
        <taxon>Catarrhini</taxon>
        <taxon>Hominidae</taxon>
        <taxon>Homo</taxon>
    </lineage>
</organism>